<feature type="chain" id="PRO_0000068606" description="Putative replication protein">
    <location>
        <begin position="1"/>
        <end position="275"/>
    </location>
</feature>
<feature type="domain" description="BRCT" evidence="1">
    <location>
        <begin position="98"/>
        <end position="198"/>
    </location>
</feature>
<keyword id="KW-0614">Plasmid</keyword>
<keyword id="KW-0615">Plasmid copy control</keyword>
<keyword id="KW-1185">Reference proteome</keyword>
<sequence length="275" mass="32635">MNLEEKKVFLKKNKKIKEFFIADDVKISSFRNEIMSMEHPIFSLKGGDTRIRIYEYGNVIIKIKPTADGIANIFDKDIWIYSISKLQSEINKNNSKISKAICFTPYDFFISTKRNKSGRSYEELRKALSRLKGTIIETNIFYSKNKKKSLSFGLIDSWKILEEKKGKLNIGMIEIILPEWLYVALKNKRILKISEDYFKIRKSIDRRIYEIARKHCGNQKFFKISTKKLYLKTGSTSLLKMFKHNLKRLVRKNNLPDYNIRYNLYKDIITFSKRF</sequence>
<evidence type="ECO:0000255" key="1">
    <source>
        <dbReference type="PROSITE-ProRule" id="PRU00033"/>
    </source>
</evidence>
<gene>
    <name type="ordered locus">WIGBRp0010</name>
</gene>
<accession>P60119</accession>
<name>REPX_WIGBR</name>
<proteinExistence type="predicted"/>
<dbReference type="EMBL" id="AB063523">
    <property type="status" value="NOT_ANNOTATED_CDS"/>
    <property type="molecule type" value="Genomic_DNA"/>
</dbReference>
<dbReference type="SMR" id="P60119"/>
<dbReference type="OrthoDB" id="581589at2"/>
<dbReference type="Proteomes" id="UP000000562">
    <property type="component" value="Plasmid pWb1"/>
</dbReference>
<dbReference type="GO" id="GO:0006276">
    <property type="term" value="P:plasmid maintenance"/>
    <property type="evidence" value="ECO:0007669"/>
    <property type="project" value="UniProtKB-KW"/>
</dbReference>
<dbReference type="InterPro" id="IPR001357">
    <property type="entry name" value="BRCT_dom"/>
</dbReference>
<dbReference type="InterPro" id="IPR018777">
    <property type="entry name" value="Replication_initiator_prot_A"/>
</dbReference>
<dbReference type="Pfam" id="PF10134">
    <property type="entry name" value="RPA"/>
    <property type="match status" value="1"/>
</dbReference>
<dbReference type="PROSITE" id="PS50172">
    <property type="entry name" value="BRCT"/>
    <property type="match status" value="1"/>
</dbReference>
<reference key="1">
    <citation type="journal article" date="2002" name="Nat. Genet.">
        <title>Genome sequence of the endocellular obligate symbiont of tsetse flies, Wigglesworthia glossinidia.</title>
        <authorList>
            <person name="Akman L."/>
            <person name="Yamashita A."/>
            <person name="Watanabe H."/>
            <person name="Oshima K."/>
            <person name="Shiba T."/>
            <person name="Hattori M."/>
            <person name="Aksoy S."/>
        </authorList>
    </citation>
    <scope>NUCLEOTIDE SEQUENCE [LARGE SCALE GENOMIC DNA]</scope>
</reference>
<geneLocation type="plasmid">
    <name>pWb1</name>
    <name>pWig1</name>
</geneLocation>
<organism>
    <name type="scientific">Wigglesworthia glossinidia brevipalpis</name>
    <dbReference type="NCBI Taxonomy" id="36870"/>
    <lineage>
        <taxon>Bacteria</taxon>
        <taxon>Pseudomonadati</taxon>
        <taxon>Pseudomonadota</taxon>
        <taxon>Gammaproteobacteria</taxon>
        <taxon>Enterobacterales</taxon>
        <taxon>Erwiniaceae</taxon>
        <taxon>Wigglesworthia</taxon>
    </lineage>
</organism>
<protein>
    <recommendedName>
        <fullName>Putative replication protein</fullName>
    </recommendedName>
</protein>